<proteinExistence type="evidence at protein level"/>
<keyword id="KW-0119">Carbohydrate metabolism</keyword>
<keyword id="KW-0320">Glycogen biosynthesis</keyword>
<keyword id="KW-0321">Glycogen metabolism</keyword>
<keyword id="KW-0328">Glycosyltransferase</keyword>
<keyword id="KW-0808">Transferase</keyword>
<reference key="1">
    <citation type="journal article" date="1992" name="DNA Seq.">
        <title>The glgB gene from the thermophile Bacillus caldolyticus encodes a thermolabile branching enzyme.</title>
        <authorList>
            <person name="Kiel J.A.K.W."/>
            <person name="Boels J.M."/>
            <person name="Beldman G."/>
            <person name="Venema G."/>
        </authorList>
    </citation>
    <scope>NUCLEOTIDE SEQUENCE [GENOMIC DNA]</scope>
</reference>
<sequence length="666" mass="78096">MIAANPTDLEVYLFHEGRLYQSYELFGAHVIRGGGAVGTRFCVWAPHAREVRLVGSFNDWNGTNSPLTKVNDEGVWTIVVPENLEGHLYKYEIITPDGRVLLKADPYAFYSELRPHTASIVYDLKGYEWNDSPWQRKKRRKRIYDQPMVIYELHFGSWKKKPDGRFYTYREMADELIPYVLERGFTHIELLPLVEHPLDRSWGYQGTGYYSVTSRYGTPHDFMYFVDRCHQAGLGVIIDWVPGHFCKDAHGLYMFDGAPTYEYANEKDRENYVWGTANFDLGKPEVRSFLISNALFWLEYYHVDGFRVDAVANMLYWPNNDRLYENPYAVEFLRQLNEAVFAYDPNVWMIAEDSTDWPRVTAPTYDGGLGFNYKWNMGWMNDMLKYMETPPHERKYAHNQVSFSLLYAYSENFILPFSHDEVVHGKKSLLNKMPGSYEEKFAQLRLLYGYMMAHPGKKLLFMGSEFAQFDEWKFAEELDWVLFDFELHRKMDEYVKQLIACYKRYKPFYELDHDPRGFEWIDVHNAEQSIFSFIRRGKKEGDVLVIVCNFTNQAYDDYKVSVPLLAPYREVLNSDAAEFGGSGHVNGKRLPAFSEPFHGKPYHVRMTIPPFGISILRPVQKRGERKQNEEEVHRHVIGRRARKPASLADEKHRETSRAVWGEVPDH</sequence>
<organism>
    <name type="scientific">Bacillus caldolyticus</name>
    <dbReference type="NCBI Taxonomy" id="1394"/>
    <lineage>
        <taxon>Bacteria</taxon>
        <taxon>Bacillati</taxon>
        <taxon>Bacillota</taxon>
        <taxon>Bacilli</taxon>
        <taxon>Bacillales</taxon>
        <taxon>Anoxybacillaceae</taxon>
        <taxon>Geobacillus</taxon>
        <taxon>Geobacillus thermoleovorans group</taxon>
    </lineage>
</organism>
<comment type="function">
    <text evidence="1">Catalyzes the formation of the alpha-1,6-glucosidic linkages in glycogen by scission of a 1,4-alpha-linked oligosaccharide from growing alpha-1,4-glucan chains and the subsequent attachment of the oligosaccharide to the alpha-1,6 position.</text>
</comment>
<comment type="catalytic activity">
    <reaction>
        <text>Transfers a segment of a (1-&gt;4)-alpha-D-glucan chain to a primary hydroxy group in a similar glucan chain.</text>
        <dbReference type="EC" id="2.4.1.18"/>
    </reaction>
</comment>
<comment type="biophysicochemical properties">
    <temperatureDependence>
        <text>Optimum temperature is about 39 degrees Celsius.</text>
    </temperatureDependence>
</comment>
<comment type="pathway">
    <text>Glycan biosynthesis; glycogen biosynthesis.</text>
</comment>
<comment type="subunit">
    <text evidence="1">Monomer.</text>
</comment>
<comment type="similarity">
    <text evidence="3">Belongs to the glycosyl hydrolase 13 family. GlgB subfamily.</text>
</comment>
<protein>
    <recommendedName>
        <fullName>1,4-alpha-glucan branching enzyme GlgB</fullName>
        <ecNumber>2.4.1.18</ecNumber>
    </recommendedName>
    <alternativeName>
        <fullName>1,4-alpha-D-glucan:1,4-alpha-D-glucan 6-glucosyl-transferase</fullName>
    </alternativeName>
    <alternativeName>
        <fullName>Alpha-(1-&gt;4)-glucan branching enzyme</fullName>
    </alternativeName>
    <alternativeName>
        <fullName>Glycogen branching enzyme</fullName>
        <shortName>BE</shortName>
    </alternativeName>
</protein>
<evidence type="ECO:0000250" key="1"/>
<evidence type="ECO:0000256" key="2">
    <source>
        <dbReference type="SAM" id="MobiDB-lite"/>
    </source>
</evidence>
<evidence type="ECO:0000305" key="3"/>
<name>GLGB_BACCL</name>
<accession>P30537</accession>
<gene>
    <name type="primary">glgB</name>
</gene>
<dbReference type="EC" id="2.4.1.18"/>
<dbReference type="EMBL" id="Z14057">
    <property type="protein sequence ID" value="CAA78440.1"/>
    <property type="molecule type" value="Genomic_DNA"/>
</dbReference>
<dbReference type="PIR" id="B56639">
    <property type="entry name" value="B56639"/>
</dbReference>
<dbReference type="SMR" id="P30537"/>
<dbReference type="CAZy" id="CBM48">
    <property type="family name" value="Carbohydrate-Binding Module Family 48"/>
</dbReference>
<dbReference type="CAZy" id="GH13">
    <property type="family name" value="Glycoside Hydrolase Family 13"/>
</dbReference>
<dbReference type="UniPathway" id="UPA00164"/>
<dbReference type="GO" id="GO:0005829">
    <property type="term" value="C:cytosol"/>
    <property type="evidence" value="ECO:0007669"/>
    <property type="project" value="TreeGrafter"/>
</dbReference>
<dbReference type="GO" id="GO:0003844">
    <property type="term" value="F:1,4-alpha-glucan branching enzyme activity"/>
    <property type="evidence" value="ECO:0007669"/>
    <property type="project" value="UniProtKB-UniRule"/>
</dbReference>
<dbReference type="GO" id="GO:0043169">
    <property type="term" value="F:cation binding"/>
    <property type="evidence" value="ECO:0007669"/>
    <property type="project" value="InterPro"/>
</dbReference>
<dbReference type="GO" id="GO:0004553">
    <property type="term" value="F:hydrolase activity, hydrolyzing O-glycosyl compounds"/>
    <property type="evidence" value="ECO:0007669"/>
    <property type="project" value="InterPro"/>
</dbReference>
<dbReference type="GO" id="GO:0005978">
    <property type="term" value="P:glycogen biosynthetic process"/>
    <property type="evidence" value="ECO:0007669"/>
    <property type="project" value="UniProtKB-UniRule"/>
</dbReference>
<dbReference type="CDD" id="cd11322">
    <property type="entry name" value="AmyAc_Glg_BE"/>
    <property type="match status" value="1"/>
</dbReference>
<dbReference type="CDD" id="cd02855">
    <property type="entry name" value="E_set_GBE_prok_N"/>
    <property type="match status" value="1"/>
</dbReference>
<dbReference type="FunFam" id="2.60.40.10:FF:000169">
    <property type="entry name" value="1,4-alpha-glucan branching enzyme GlgB"/>
    <property type="match status" value="1"/>
</dbReference>
<dbReference type="FunFam" id="2.60.40.1180:FF:000002">
    <property type="entry name" value="1,4-alpha-glucan branching enzyme GlgB"/>
    <property type="match status" value="1"/>
</dbReference>
<dbReference type="FunFam" id="3.20.20.80:FF:000003">
    <property type="entry name" value="1,4-alpha-glucan branching enzyme GlgB"/>
    <property type="match status" value="1"/>
</dbReference>
<dbReference type="Gene3D" id="3.20.20.80">
    <property type="entry name" value="Glycosidases"/>
    <property type="match status" value="1"/>
</dbReference>
<dbReference type="Gene3D" id="2.60.40.1180">
    <property type="entry name" value="Golgi alpha-mannosidase II"/>
    <property type="match status" value="1"/>
</dbReference>
<dbReference type="Gene3D" id="2.60.40.10">
    <property type="entry name" value="Immunoglobulins"/>
    <property type="match status" value="1"/>
</dbReference>
<dbReference type="HAMAP" id="MF_00685">
    <property type="entry name" value="GlgB"/>
    <property type="match status" value="1"/>
</dbReference>
<dbReference type="InterPro" id="IPR006048">
    <property type="entry name" value="A-amylase/branching_C"/>
</dbReference>
<dbReference type="InterPro" id="IPR037439">
    <property type="entry name" value="Branching_enzy"/>
</dbReference>
<dbReference type="InterPro" id="IPR006407">
    <property type="entry name" value="GlgB"/>
</dbReference>
<dbReference type="InterPro" id="IPR044143">
    <property type="entry name" value="GlgB_N_E_set_prok"/>
</dbReference>
<dbReference type="InterPro" id="IPR006047">
    <property type="entry name" value="Glyco_hydro_13_cat_dom"/>
</dbReference>
<dbReference type="InterPro" id="IPR004193">
    <property type="entry name" value="Glyco_hydro_13_N"/>
</dbReference>
<dbReference type="InterPro" id="IPR013780">
    <property type="entry name" value="Glyco_hydro_b"/>
</dbReference>
<dbReference type="InterPro" id="IPR017853">
    <property type="entry name" value="Glycoside_hydrolase_SF"/>
</dbReference>
<dbReference type="InterPro" id="IPR013783">
    <property type="entry name" value="Ig-like_fold"/>
</dbReference>
<dbReference type="InterPro" id="IPR014756">
    <property type="entry name" value="Ig_E-set"/>
</dbReference>
<dbReference type="NCBIfam" id="TIGR01515">
    <property type="entry name" value="branching_enzym"/>
    <property type="match status" value="1"/>
</dbReference>
<dbReference type="NCBIfam" id="NF003811">
    <property type="entry name" value="PRK05402.1"/>
    <property type="match status" value="1"/>
</dbReference>
<dbReference type="NCBIfam" id="NF008967">
    <property type="entry name" value="PRK12313.1"/>
    <property type="match status" value="1"/>
</dbReference>
<dbReference type="PANTHER" id="PTHR43651">
    <property type="entry name" value="1,4-ALPHA-GLUCAN-BRANCHING ENZYME"/>
    <property type="match status" value="1"/>
</dbReference>
<dbReference type="PANTHER" id="PTHR43651:SF3">
    <property type="entry name" value="1,4-ALPHA-GLUCAN-BRANCHING ENZYME"/>
    <property type="match status" value="1"/>
</dbReference>
<dbReference type="Pfam" id="PF00128">
    <property type="entry name" value="Alpha-amylase"/>
    <property type="match status" value="2"/>
</dbReference>
<dbReference type="Pfam" id="PF02806">
    <property type="entry name" value="Alpha-amylase_C"/>
    <property type="match status" value="1"/>
</dbReference>
<dbReference type="Pfam" id="PF02922">
    <property type="entry name" value="CBM_48"/>
    <property type="match status" value="1"/>
</dbReference>
<dbReference type="PIRSF" id="PIRSF000463">
    <property type="entry name" value="GlgB"/>
    <property type="match status" value="1"/>
</dbReference>
<dbReference type="SMART" id="SM00642">
    <property type="entry name" value="Aamy"/>
    <property type="match status" value="1"/>
</dbReference>
<dbReference type="SUPFAM" id="SSF51445">
    <property type="entry name" value="(Trans)glycosidases"/>
    <property type="match status" value="1"/>
</dbReference>
<dbReference type="SUPFAM" id="SSF81296">
    <property type="entry name" value="E set domains"/>
    <property type="match status" value="1"/>
</dbReference>
<dbReference type="SUPFAM" id="SSF51011">
    <property type="entry name" value="Glycosyl hydrolase domain"/>
    <property type="match status" value="1"/>
</dbReference>
<feature type="chain" id="PRO_0000188677" description="1,4-alpha-glucan branching enzyme GlgB">
    <location>
        <begin position="1"/>
        <end position="666"/>
    </location>
</feature>
<feature type="region of interest" description="Disordered" evidence="2">
    <location>
        <begin position="622"/>
        <end position="666"/>
    </location>
</feature>
<feature type="compositionally biased region" description="Basic and acidic residues" evidence="2">
    <location>
        <begin position="622"/>
        <end position="634"/>
    </location>
</feature>
<feature type="active site" description="Nucleophile" evidence="1">
    <location>
        <position position="309"/>
    </location>
</feature>
<feature type="active site" description="Proton donor" evidence="1">
    <location>
        <position position="352"/>
    </location>
</feature>